<feature type="chain" id="PRO_1000082563" description="Ribosomal RNA small subunit methyltransferase A">
    <location>
        <begin position="1"/>
        <end position="267"/>
    </location>
</feature>
<feature type="binding site" evidence="1">
    <location>
        <position position="18"/>
    </location>
    <ligand>
        <name>S-adenosyl-L-methionine</name>
        <dbReference type="ChEBI" id="CHEBI:59789"/>
    </ligand>
</feature>
<feature type="binding site" evidence="1">
    <location>
        <position position="20"/>
    </location>
    <ligand>
        <name>S-adenosyl-L-methionine</name>
        <dbReference type="ChEBI" id="CHEBI:59789"/>
    </ligand>
</feature>
<feature type="binding site" evidence="1">
    <location>
        <position position="45"/>
    </location>
    <ligand>
        <name>S-adenosyl-L-methionine</name>
        <dbReference type="ChEBI" id="CHEBI:59789"/>
    </ligand>
</feature>
<feature type="binding site" evidence="1">
    <location>
        <position position="66"/>
    </location>
    <ligand>
        <name>S-adenosyl-L-methionine</name>
        <dbReference type="ChEBI" id="CHEBI:59789"/>
    </ligand>
</feature>
<feature type="binding site" evidence="1">
    <location>
        <position position="91"/>
    </location>
    <ligand>
        <name>S-adenosyl-L-methionine</name>
        <dbReference type="ChEBI" id="CHEBI:59789"/>
    </ligand>
</feature>
<feature type="binding site" evidence="1">
    <location>
        <position position="112"/>
    </location>
    <ligand>
        <name>S-adenosyl-L-methionine</name>
        <dbReference type="ChEBI" id="CHEBI:59789"/>
    </ligand>
</feature>
<reference key="1">
    <citation type="submission" date="2007-08" db="EMBL/GenBank/DDBJ databases">
        <title>Complete sequence of Shewanella sediminis HAW-EB3.</title>
        <authorList>
            <consortium name="US DOE Joint Genome Institute"/>
            <person name="Copeland A."/>
            <person name="Lucas S."/>
            <person name="Lapidus A."/>
            <person name="Barry K."/>
            <person name="Glavina del Rio T."/>
            <person name="Dalin E."/>
            <person name="Tice H."/>
            <person name="Pitluck S."/>
            <person name="Chertkov O."/>
            <person name="Brettin T."/>
            <person name="Bruce D."/>
            <person name="Detter J.C."/>
            <person name="Han C."/>
            <person name="Schmutz J."/>
            <person name="Larimer F."/>
            <person name="Land M."/>
            <person name="Hauser L."/>
            <person name="Kyrpides N."/>
            <person name="Kim E."/>
            <person name="Zhao J.-S."/>
            <person name="Richardson P."/>
        </authorList>
    </citation>
    <scope>NUCLEOTIDE SEQUENCE [LARGE SCALE GENOMIC DNA]</scope>
    <source>
        <strain>HAW-EB3</strain>
    </source>
</reference>
<comment type="function">
    <text evidence="1">Specifically dimethylates two adjacent adenosines (A1518 and A1519) in the loop of a conserved hairpin near the 3'-end of 16S rRNA in the 30S particle. May play a critical role in biogenesis of 30S subunits.</text>
</comment>
<comment type="catalytic activity">
    <reaction evidence="1">
        <text>adenosine(1518)/adenosine(1519) in 16S rRNA + 4 S-adenosyl-L-methionine = N(6)-dimethyladenosine(1518)/N(6)-dimethyladenosine(1519) in 16S rRNA + 4 S-adenosyl-L-homocysteine + 4 H(+)</text>
        <dbReference type="Rhea" id="RHEA:19609"/>
        <dbReference type="Rhea" id="RHEA-COMP:10232"/>
        <dbReference type="Rhea" id="RHEA-COMP:10233"/>
        <dbReference type="ChEBI" id="CHEBI:15378"/>
        <dbReference type="ChEBI" id="CHEBI:57856"/>
        <dbReference type="ChEBI" id="CHEBI:59789"/>
        <dbReference type="ChEBI" id="CHEBI:74411"/>
        <dbReference type="ChEBI" id="CHEBI:74493"/>
        <dbReference type="EC" id="2.1.1.182"/>
    </reaction>
</comment>
<comment type="subcellular location">
    <subcellularLocation>
        <location evidence="1">Cytoplasm</location>
    </subcellularLocation>
</comment>
<comment type="similarity">
    <text evidence="1">Belongs to the class I-like SAM-binding methyltransferase superfamily. rRNA adenine N(6)-methyltransferase family. RsmA subfamily.</text>
</comment>
<proteinExistence type="inferred from homology"/>
<accession>A8FRV2</accession>
<dbReference type="EC" id="2.1.1.182" evidence="1"/>
<dbReference type="EMBL" id="CP000821">
    <property type="protein sequence ID" value="ABV35575.1"/>
    <property type="molecule type" value="Genomic_DNA"/>
</dbReference>
<dbReference type="RefSeq" id="WP_012141311.1">
    <property type="nucleotide sequence ID" value="NC_009831.1"/>
</dbReference>
<dbReference type="SMR" id="A8FRV2"/>
<dbReference type="STRING" id="425104.Ssed_0964"/>
<dbReference type="KEGG" id="sse:Ssed_0964"/>
<dbReference type="eggNOG" id="COG0030">
    <property type="taxonomic scope" value="Bacteria"/>
</dbReference>
<dbReference type="HOGENOM" id="CLU_041220_0_1_6"/>
<dbReference type="OrthoDB" id="9814755at2"/>
<dbReference type="Proteomes" id="UP000002015">
    <property type="component" value="Chromosome"/>
</dbReference>
<dbReference type="GO" id="GO:0005829">
    <property type="term" value="C:cytosol"/>
    <property type="evidence" value="ECO:0007669"/>
    <property type="project" value="TreeGrafter"/>
</dbReference>
<dbReference type="GO" id="GO:0052908">
    <property type="term" value="F:16S rRNA (adenine(1518)-N(6)/adenine(1519)-N(6))-dimethyltransferase activity"/>
    <property type="evidence" value="ECO:0007669"/>
    <property type="project" value="UniProtKB-EC"/>
</dbReference>
<dbReference type="GO" id="GO:0003723">
    <property type="term" value="F:RNA binding"/>
    <property type="evidence" value="ECO:0007669"/>
    <property type="project" value="UniProtKB-KW"/>
</dbReference>
<dbReference type="CDD" id="cd02440">
    <property type="entry name" value="AdoMet_MTases"/>
    <property type="match status" value="1"/>
</dbReference>
<dbReference type="FunFam" id="1.10.8.100:FF:000001">
    <property type="entry name" value="Ribosomal RNA small subunit methyltransferase A"/>
    <property type="match status" value="1"/>
</dbReference>
<dbReference type="FunFam" id="3.40.50.150:FF:000006">
    <property type="entry name" value="Ribosomal RNA small subunit methyltransferase A"/>
    <property type="match status" value="1"/>
</dbReference>
<dbReference type="Gene3D" id="1.10.8.100">
    <property type="entry name" value="Ribosomal RNA adenine dimethylase-like, domain 2"/>
    <property type="match status" value="1"/>
</dbReference>
<dbReference type="Gene3D" id="3.40.50.150">
    <property type="entry name" value="Vaccinia Virus protein VP39"/>
    <property type="match status" value="1"/>
</dbReference>
<dbReference type="HAMAP" id="MF_00607">
    <property type="entry name" value="16SrRNA_methyltr_A"/>
    <property type="match status" value="1"/>
</dbReference>
<dbReference type="InterPro" id="IPR001737">
    <property type="entry name" value="KsgA/Erm"/>
</dbReference>
<dbReference type="InterPro" id="IPR023165">
    <property type="entry name" value="rRNA_Ade_diMease-like_C"/>
</dbReference>
<dbReference type="InterPro" id="IPR020596">
    <property type="entry name" value="rRNA_Ade_Mease_Trfase_CS"/>
</dbReference>
<dbReference type="InterPro" id="IPR020598">
    <property type="entry name" value="rRNA_Ade_methylase_Trfase_N"/>
</dbReference>
<dbReference type="InterPro" id="IPR011530">
    <property type="entry name" value="rRNA_adenine_dimethylase"/>
</dbReference>
<dbReference type="InterPro" id="IPR029063">
    <property type="entry name" value="SAM-dependent_MTases_sf"/>
</dbReference>
<dbReference type="NCBIfam" id="TIGR00755">
    <property type="entry name" value="ksgA"/>
    <property type="match status" value="1"/>
</dbReference>
<dbReference type="PANTHER" id="PTHR11727">
    <property type="entry name" value="DIMETHYLADENOSINE TRANSFERASE"/>
    <property type="match status" value="1"/>
</dbReference>
<dbReference type="PANTHER" id="PTHR11727:SF7">
    <property type="entry name" value="DIMETHYLADENOSINE TRANSFERASE-RELATED"/>
    <property type="match status" value="1"/>
</dbReference>
<dbReference type="Pfam" id="PF00398">
    <property type="entry name" value="RrnaAD"/>
    <property type="match status" value="1"/>
</dbReference>
<dbReference type="SMART" id="SM00650">
    <property type="entry name" value="rADc"/>
    <property type="match status" value="1"/>
</dbReference>
<dbReference type="SUPFAM" id="SSF53335">
    <property type="entry name" value="S-adenosyl-L-methionine-dependent methyltransferases"/>
    <property type="match status" value="1"/>
</dbReference>
<dbReference type="PROSITE" id="PS01131">
    <property type="entry name" value="RRNA_A_DIMETH"/>
    <property type="match status" value="1"/>
</dbReference>
<dbReference type="PROSITE" id="PS51689">
    <property type="entry name" value="SAM_RNA_A_N6_MT"/>
    <property type="match status" value="1"/>
</dbReference>
<gene>
    <name evidence="1" type="primary">rsmA</name>
    <name evidence="1" type="synonym">ksgA</name>
    <name type="ordered locus">Ssed_0964</name>
</gene>
<protein>
    <recommendedName>
        <fullName evidence="1">Ribosomal RNA small subunit methyltransferase A</fullName>
        <ecNumber evidence="1">2.1.1.182</ecNumber>
    </recommendedName>
    <alternativeName>
        <fullName evidence="1">16S rRNA (adenine(1518)-N(6)/adenine(1519)-N(6))-dimethyltransferase</fullName>
    </alternativeName>
    <alternativeName>
        <fullName evidence="1">16S rRNA dimethyladenosine transferase</fullName>
    </alternativeName>
    <alternativeName>
        <fullName evidence="1">16S rRNA dimethylase</fullName>
    </alternativeName>
    <alternativeName>
        <fullName evidence="1">S-adenosylmethionine-6-N', N'-adenosyl(rRNA) dimethyltransferase</fullName>
    </alternativeName>
</protein>
<sequence>MSNKVHLGHTARKRFGQNFLTDGNVINRIVGAIAPDNDHVMVEIGPGLGALTEPVANGIDKLTVVELDKDLVERLKEHPTLKHKLDIHQGDALKFDFSQLVEEGRQMKVFGNLPYNISTPLMFHLFEFAEQIENMHFMLQKEVVLRLSASPGTKAYGRLTVMAQYHCQVMPVLEVPPHSFTPAPKVDSAVVRLVPYKTKPWPCKDVDQLRHLTTTAFNMRRKTLRNNLKHMISDEEFAALGIDATLRPEQITVQQYVAMANLVIDKK</sequence>
<keyword id="KW-0963">Cytoplasm</keyword>
<keyword id="KW-0489">Methyltransferase</keyword>
<keyword id="KW-1185">Reference proteome</keyword>
<keyword id="KW-0694">RNA-binding</keyword>
<keyword id="KW-0698">rRNA processing</keyword>
<keyword id="KW-0949">S-adenosyl-L-methionine</keyword>
<keyword id="KW-0808">Transferase</keyword>
<evidence type="ECO:0000255" key="1">
    <source>
        <dbReference type="HAMAP-Rule" id="MF_00607"/>
    </source>
</evidence>
<organism>
    <name type="scientific">Shewanella sediminis (strain HAW-EB3)</name>
    <dbReference type="NCBI Taxonomy" id="425104"/>
    <lineage>
        <taxon>Bacteria</taxon>
        <taxon>Pseudomonadati</taxon>
        <taxon>Pseudomonadota</taxon>
        <taxon>Gammaproteobacteria</taxon>
        <taxon>Alteromonadales</taxon>
        <taxon>Shewanellaceae</taxon>
        <taxon>Shewanella</taxon>
    </lineage>
</organism>
<name>RSMA_SHESH</name>